<reference key="1">
    <citation type="journal article" date="1992" name="Biosci. Biotechnol. Biochem.">
        <title>Cloning and nucleotide sequence of a frxC-ORF469 gene cluster of Synechocystis PCC6803: conservation with liverwort chloroplast frxC-ORF465 and nif operon.</title>
        <authorList>
            <person name="Ogura Y."/>
            <person name="Takemura M."/>
            <person name="Oda K."/>
            <person name="Yamato K."/>
            <person name="Ohta E."/>
            <person name="Fukuzawa H."/>
            <person name="Ohyama K."/>
        </authorList>
    </citation>
    <scope>NUCLEOTIDE SEQUENCE [GENOMIC DNA]</scope>
</reference>
<reference key="2">
    <citation type="journal article" date="1996" name="DNA Res.">
        <title>Sequence analysis of the genome of the unicellular cyanobacterium Synechocystis sp. strain PCC6803. II. Sequence determination of the entire genome and assignment of potential protein-coding regions.</title>
        <authorList>
            <person name="Kaneko T."/>
            <person name="Sato S."/>
            <person name="Kotani H."/>
            <person name="Tanaka A."/>
            <person name="Asamizu E."/>
            <person name="Nakamura Y."/>
            <person name="Miyajima N."/>
            <person name="Hirosawa M."/>
            <person name="Sugiura M."/>
            <person name="Sasamoto S."/>
            <person name="Kimura T."/>
            <person name="Hosouchi T."/>
            <person name="Matsuno A."/>
            <person name="Muraki A."/>
            <person name="Nakazaki N."/>
            <person name="Naruo K."/>
            <person name="Okumura S."/>
            <person name="Shimpo S."/>
            <person name="Takeuchi C."/>
            <person name="Wada T."/>
            <person name="Watanabe A."/>
            <person name="Yamada M."/>
            <person name="Yasuda M."/>
            <person name="Tabata S."/>
        </authorList>
    </citation>
    <scope>NUCLEOTIDE SEQUENCE [LARGE SCALE GENOMIC DNA]</scope>
    <source>
        <strain>ATCC 27184 / PCC 6803 / Kazusa</strain>
    </source>
</reference>
<sequence length="469" mass="52475">MTVAQQAPSALNFDCETGNYHTFCPISCVSWLYQKIEDSFFLVIGTKTCGYFLQNAMGVMIFAEPRYAMAELEEGDISAQLKDYEELKRLCLQIKRDRNPSVIVWIGTCTTEIIKMDLEGLAPQLEAEIGIPIVTARANGLDYAFTQGEDTVLASMAHKCPTSAQVQGEDKEERNAIQKLLTFGRKADQEKVESEYVDHQPLVLFGSLPDPVVTNLTLELKKQGVKVSGWLPAKRYTELPVIDEGYYVAGVNPFLSRTATTLMRRRKCKLIGAPFPIGPDGTRAWIEKICSVLGIEPQGLEEREAQIWASLEDYIQLIRGKSVFFMGDNLLEVSLARFLIRCGMTCPEIGIPYMDKRYQAAELALLEKTCSDMGVPLPNIVEKPDNYNQIQRIKALQPDLVITGMAHANPLEAQGINTKWSVEFTFAQIHGFTNARDILELATRPLRRNSQLGELGWDKLIAKDVPAQV</sequence>
<feature type="chain" id="PRO_0000208605" description="Light-independent protochlorophyllide reductase subunit N">
    <location>
        <begin position="1"/>
        <end position="469"/>
    </location>
</feature>
<feature type="binding site" evidence="1">
    <location>
        <position position="24"/>
    </location>
    <ligand>
        <name>[4Fe-4S] cluster</name>
        <dbReference type="ChEBI" id="CHEBI:49883"/>
        <note>ligand shared with heterodimeric partner</note>
    </ligand>
</feature>
<feature type="binding site" evidence="1">
    <location>
        <position position="49"/>
    </location>
    <ligand>
        <name>[4Fe-4S] cluster</name>
        <dbReference type="ChEBI" id="CHEBI:49883"/>
        <note>ligand shared with heterodimeric partner</note>
    </ligand>
</feature>
<feature type="binding site" evidence="1">
    <location>
        <position position="109"/>
    </location>
    <ligand>
        <name>[4Fe-4S] cluster</name>
        <dbReference type="ChEBI" id="CHEBI:49883"/>
        <note>ligand shared with heterodimeric partner</note>
    </ligand>
</feature>
<protein>
    <recommendedName>
        <fullName evidence="1">Light-independent protochlorophyllide reductase subunit N</fullName>
        <shortName evidence="1">DPOR subunit N</shortName>
        <shortName evidence="1">LI-POR subunit N</shortName>
        <ecNumber evidence="1">1.3.7.7</ecNumber>
    </recommendedName>
</protein>
<comment type="function">
    <text evidence="1">Component of the dark-operative protochlorophyllide reductase (DPOR) that uses Mg-ATP and reduced ferredoxin to reduce ring D of protochlorophyllide (Pchlide) to form chlorophyllide a (Chlide). This reaction is light-independent. The NB-protein (ChlN-ChlB) is the catalytic component of the complex.</text>
</comment>
<comment type="catalytic activity">
    <reaction evidence="1">
        <text>chlorophyllide a + oxidized 2[4Fe-4S]-[ferredoxin] + 2 ADP + 2 phosphate = protochlorophyllide a + reduced 2[4Fe-4S]-[ferredoxin] + 2 ATP + 2 H2O</text>
        <dbReference type="Rhea" id="RHEA:28202"/>
        <dbReference type="Rhea" id="RHEA-COMP:10002"/>
        <dbReference type="Rhea" id="RHEA-COMP:10004"/>
        <dbReference type="ChEBI" id="CHEBI:15377"/>
        <dbReference type="ChEBI" id="CHEBI:30616"/>
        <dbReference type="ChEBI" id="CHEBI:33722"/>
        <dbReference type="ChEBI" id="CHEBI:33723"/>
        <dbReference type="ChEBI" id="CHEBI:43474"/>
        <dbReference type="ChEBI" id="CHEBI:83348"/>
        <dbReference type="ChEBI" id="CHEBI:83350"/>
        <dbReference type="ChEBI" id="CHEBI:456216"/>
        <dbReference type="EC" id="1.3.7.7"/>
    </reaction>
</comment>
<comment type="cofactor">
    <cofactor evidence="1">
        <name>[4Fe-4S] cluster</name>
        <dbReference type="ChEBI" id="CHEBI:49883"/>
    </cofactor>
    <text evidence="1">Binds 1 [4Fe-4S] cluster per heterodimer. The cluster is bound at the heterodimer interface by residues from both subunits.</text>
</comment>
<comment type="pathway">
    <text evidence="1">Porphyrin-containing compound metabolism; chlorophyll biosynthesis (light-independent).</text>
</comment>
<comment type="subunit">
    <text evidence="1">Protochlorophyllide reductase is composed of three subunits; ChlL, ChlN and ChlB. Forms a heterotetramer of two ChlB and two ChlN subunits.</text>
</comment>
<comment type="similarity">
    <text evidence="1">Belongs to the BchN/ChlN family.</text>
</comment>
<dbReference type="EC" id="1.3.7.7" evidence="1"/>
<dbReference type="EMBL" id="D10474">
    <property type="protein sequence ID" value="BAA01276.1"/>
    <property type="molecule type" value="Genomic_DNA"/>
</dbReference>
<dbReference type="EMBL" id="BA000022">
    <property type="protein sequence ID" value="BAA18746.1"/>
    <property type="molecule type" value="Genomic_DNA"/>
</dbReference>
<dbReference type="PIR" id="JT0601">
    <property type="entry name" value="JT0601"/>
</dbReference>
<dbReference type="SMR" id="P28372"/>
<dbReference type="IntAct" id="P28372">
    <property type="interactions" value="2"/>
</dbReference>
<dbReference type="STRING" id="1148.gene:10500518"/>
<dbReference type="PaxDb" id="1148-1653835"/>
<dbReference type="EnsemblBacteria" id="BAA18746">
    <property type="protein sequence ID" value="BAA18746"/>
    <property type="gene ID" value="BAA18746"/>
</dbReference>
<dbReference type="KEGG" id="syn:slr0750"/>
<dbReference type="eggNOG" id="COG2710">
    <property type="taxonomic scope" value="Bacteria"/>
</dbReference>
<dbReference type="InParanoid" id="P28372"/>
<dbReference type="PhylomeDB" id="P28372"/>
<dbReference type="UniPathway" id="UPA00670"/>
<dbReference type="Proteomes" id="UP000001425">
    <property type="component" value="Chromosome"/>
</dbReference>
<dbReference type="GO" id="GO:0051539">
    <property type="term" value="F:4 iron, 4 sulfur cluster binding"/>
    <property type="evidence" value="ECO:0007669"/>
    <property type="project" value="UniProtKB-UniRule"/>
</dbReference>
<dbReference type="GO" id="GO:0005524">
    <property type="term" value="F:ATP binding"/>
    <property type="evidence" value="ECO:0007669"/>
    <property type="project" value="UniProtKB-UniRule"/>
</dbReference>
<dbReference type="GO" id="GO:0046872">
    <property type="term" value="F:metal ion binding"/>
    <property type="evidence" value="ECO:0007669"/>
    <property type="project" value="UniProtKB-KW"/>
</dbReference>
<dbReference type="GO" id="GO:0016730">
    <property type="term" value="F:oxidoreductase activity, acting on iron-sulfur proteins as donors"/>
    <property type="evidence" value="ECO:0007669"/>
    <property type="project" value="InterPro"/>
</dbReference>
<dbReference type="GO" id="GO:0016636">
    <property type="term" value="F:oxidoreductase activity, acting on the CH-CH group of donors, iron-sulfur protein as acceptor"/>
    <property type="evidence" value="ECO:0007669"/>
    <property type="project" value="UniProtKB-UniRule"/>
</dbReference>
<dbReference type="GO" id="GO:0036068">
    <property type="term" value="P:light-independent chlorophyll biosynthetic process"/>
    <property type="evidence" value="ECO:0007669"/>
    <property type="project" value="UniProtKB-UniRule"/>
</dbReference>
<dbReference type="GO" id="GO:0019685">
    <property type="term" value="P:photosynthesis, dark reaction"/>
    <property type="evidence" value="ECO:0007669"/>
    <property type="project" value="InterPro"/>
</dbReference>
<dbReference type="CDD" id="cd01979">
    <property type="entry name" value="Pchlide_reductase_N"/>
    <property type="match status" value="1"/>
</dbReference>
<dbReference type="Gene3D" id="3.40.50.1980">
    <property type="entry name" value="Nitrogenase molybdenum iron protein domain"/>
    <property type="match status" value="3"/>
</dbReference>
<dbReference type="HAMAP" id="MF_00352">
    <property type="entry name" value="ChlN_BchN"/>
    <property type="match status" value="1"/>
</dbReference>
<dbReference type="InterPro" id="IPR050293">
    <property type="entry name" value="LIPOR_BchN/ChlN"/>
</dbReference>
<dbReference type="InterPro" id="IPR000510">
    <property type="entry name" value="Nase/OxRdtase_comp1"/>
</dbReference>
<dbReference type="InterPro" id="IPR005970">
    <property type="entry name" value="Protochl_reductN"/>
</dbReference>
<dbReference type="NCBIfam" id="TIGR01279">
    <property type="entry name" value="DPOR_bchN"/>
    <property type="match status" value="1"/>
</dbReference>
<dbReference type="NCBIfam" id="NF002768">
    <property type="entry name" value="PRK02842.1"/>
    <property type="match status" value="1"/>
</dbReference>
<dbReference type="PANTHER" id="PTHR39429">
    <property type="entry name" value="LIGHT-INDEPENDENT PROTOCHLOROPHYLLIDE REDUCTASE SUBUNIT N"/>
    <property type="match status" value="1"/>
</dbReference>
<dbReference type="PANTHER" id="PTHR39429:SF3">
    <property type="entry name" value="LIGHT-INDEPENDENT PROTOCHLOROPHYLLIDE REDUCTASE SUBUNIT N"/>
    <property type="match status" value="1"/>
</dbReference>
<dbReference type="Pfam" id="PF00148">
    <property type="entry name" value="Oxidored_nitro"/>
    <property type="match status" value="1"/>
</dbReference>
<dbReference type="PIRSF" id="PIRSF000162">
    <property type="entry name" value="P_chlorophyll_rd"/>
    <property type="match status" value="1"/>
</dbReference>
<dbReference type="SUPFAM" id="SSF53807">
    <property type="entry name" value="Helical backbone' metal receptor"/>
    <property type="match status" value="1"/>
</dbReference>
<organism>
    <name type="scientific">Synechocystis sp. (strain ATCC 27184 / PCC 6803 / Kazusa)</name>
    <dbReference type="NCBI Taxonomy" id="1111708"/>
    <lineage>
        <taxon>Bacteria</taxon>
        <taxon>Bacillati</taxon>
        <taxon>Cyanobacteriota</taxon>
        <taxon>Cyanophyceae</taxon>
        <taxon>Synechococcales</taxon>
        <taxon>Merismopediaceae</taxon>
        <taxon>Synechocystis</taxon>
    </lineage>
</organism>
<gene>
    <name evidence="1" type="primary">chlN</name>
    <name type="ordered locus">slr0750</name>
</gene>
<accession>P28372</accession>
<name>CHLN_SYNY3</name>
<evidence type="ECO:0000255" key="1">
    <source>
        <dbReference type="HAMAP-Rule" id="MF_00352"/>
    </source>
</evidence>
<keyword id="KW-0004">4Fe-4S</keyword>
<keyword id="KW-0067">ATP-binding</keyword>
<keyword id="KW-0149">Chlorophyll biosynthesis</keyword>
<keyword id="KW-0408">Iron</keyword>
<keyword id="KW-0411">Iron-sulfur</keyword>
<keyword id="KW-0479">Metal-binding</keyword>
<keyword id="KW-0547">Nucleotide-binding</keyword>
<keyword id="KW-0560">Oxidoreductase</keyword>
<keyword id="KW-0602">Photosynthesis</keyword>
<keyword id="KW-1185">Reference proteome</keyword>
<proteinExistence type="inferred from homology"/>